<reference key="1">
    <citation type="journal article" date="2002" name="Nature">
        <title>The genome sequence of Schizosaccharomyces pombe.</title>
        <authorList>
            <person name="Wood V."/>
            <person name="Gwilliam R."/>
            <person name="Rajandream M.A."/>
            <person name="Lyne M.H."/>
            <person name="Lyne R."/>
            <person name="Stewart A."/>
            <person name="Sgouros J.G."/>
            <person name="Peat N."/>
            <person name="Hayles J."/>
            <person name="Baker S.G."/>
            <person name="Basham D."/>
            <person name="Bowman S."/>
            <person name="Brooks K."/>
            <person name="Brown D."/>
            <person name="Brown S."/>
            <person name="Chillingworth T."/>
            <person name="Churcher C.M."/>
            <person name="Collins M."/>
            <person name="Connor R."/>
            <person name="Cronin A."/>
            <person name="Davis P."/>
            <person name="Feltwell T."/>
            <person name="Fraser A."/>
            <person name="Gentles S."/>
            <person name="Goble A."/>
            <person name="Hamlin N."/>
            <person name="Harris D.E."/>
            <person name="Hidalgo J."/>
            <person name="Hodgson G."/>
            <person name="Holroyd S."/>
            <person name="Hornsby T."/>
            <person name="Howarth S."/>
            <person name="Huckle E.J."/>
            <person name="Hunt S."/>
            <person name="Jagels K."/>
            <person name="James K.D."/>
            <person name="Jones L."/>
            <person name="Jones M."/>
            <person name="Leather S."/>
            <person name="McDonald S."/>
            <person name="McLean J."/>
            <person name="Mooney P."/>
            <person name="Moule S."/>
            <person name="Mungall K.L."/>
            <person name="Murphy L.D."/>
            <person name="Niblett D."/>
            <person name="Odell C."/>
            <person name="Oliver K."/>
            <person name="O'Neil S."/>
            <person name="Pearson D."/>
            <person name="Quail M.A."/>
            <person name="Rabbinowitsch E."/>
            <person name="Rutherford K.M."/>
            <person name="Rutter S."/>
            <person name="Saunders D."/>
            <person name="Seeger K."/>
            <person name="Sharp S."/>
            <person name="Skelton J."/>
            <person name="Simmonds M.N."/>
            <person name="Squares R."/>
            <person name="Squares S."/>
            <person name="Stevens K."/>
            <person name="Taylor K."/>
            <person name="Taylor R.G."/>
            <person name="Tivey A."/>
            <person name="Walsh S.V."/>
            <person name="Warren T."/>
            <person name="Whitehead S."/>
            <person name="Woodward J.R."/>
            <person name="Volckaert G."/>
            <person name="Aert R."/>
            <person name="Robben J."/>
            <person name="Grymonprez B."/>
            <person name="Weltjens I."/>
            <person name="Vanstreels E."/>
            <person name="Rieger M."/>
            <person name="Schaefer M."/>
            <person name="Mueller-Auer S."/>
            <person name="Gabel C."/>
            <person name="Fuchs M."/>
            <person name="Duesterhoeft A."/>
            <person name="Fritzc C."/>
            <person name="Holzer E."/>
            <person name="Moestl D."/>
            <person name="Hilbert H."/>
            <person name="Borzym K."/>
            <person name="Langer I."/>
            <person name="Beck A."/>
            <person name="Lehrach H."/>
            <person name="Reinhardt R."/>
            <person name="Pohl T.M."/>
            <person name="Eger P."/>
            <person name="Zimmermann W."/>
            <person name="Wedler H."/>
            <person name="Wambutt R."/>
            <person name="Purnelle B."/>
            <person name="Goffeau A."/>
            <person name="Cadieu E."/>
            <person name="Dreano S."/>
            <person name="Gloux S."/>
            <person name="Lelaure V."/>
            <person name="Mottier S."/>
            <person name="Galibert F."/>
            <person name="Aves S.J."/>
            <person name="Xiang Z."/>
            <person name="Hunt C."/>
            <person name="Moore K."/>
            <person name="Hurst S.M."/>
            <person name="Lucas M."/>
            <person name="Rochet M."/>
            <person name="Gaillardin C."/>
            <person name="Tallada V.A."/>
            <person name="Garzon A."/>
            <person name="Thode G."/>
            <person name="Daga R.R."/>
            <person name="Cruzado L."/>
            <person name="Jimenez J."/>
            <person name="Sanchez M."/>
            <person name="del Rey F."/>
            <person name="Benito J."/>
            <person name="Dominguez A."/>
            <person name="Revuelta J.L."/>
            <person name="Moreno S."/>
            <person name="Armstrong J."/>
            <person name="Forsburg S.L."/>
            <person name="Cerutti L."/>
            <person name="Lowe T."/>
            <person name="McCombie W.R."/>
            <person name="Paulsen I."/>
            <person name="Potashkin J."/>
            <person name="Shpakovski G.V."/>
            <person name="Ussery D."/>
            <person name="Barrell B.G."/>
            <person name="Nurse P."/>
        </authorList>
    </citation>
    <scope>NUCLEOTIDE SEQUENCE [LARGE SCALE GENOMIC DNA]</scope>
    <source>
        <strain>972 / ATCC 24843</strain>
    </source>
</reference>
<reference key="2">
    <citation type="journal article" date="2011" name="Science">
        <title>Comparative functional genomics of the fission yeasts.</title>
        <authorList>
            <person name="Rhind N."/>
            <person name="Chen Z."/>
            <person name="Yassour M."/>
            <person name="Thompson D.A."/>
            <person name="Haas B.J."/>
            <person name="Habib N."/>
            <person name="Wapinski I."/>
            <person name="Roy S."/>
            <person name="Lin M.F."/>
            <person name="Heiman D.I."/>
            <person name="Young S.K."/>
            <person name="Furuya K."/>
            <person name="Guo Y."/>
            <person name="Pidoux A."/>
            <person name="Chen H.M."/>
            <person name="Robbertse B."/>
            <person name="Goldberg J.M."/>
            <person name="Aoki K."/>
            <person name="Bayne E.H."/>
            <person name="Berlin A.M."/>
            <person name="Desjardins C.A."/>
            <person name="Dobbs E."/>
            <person name="Dukaj L."/>
            <person name="Fan L."/>
            <person name="FitzGerald M.G."/>
            <person name="French C."/>
            <person name="Gujja S."/>
            <person name="Hansen K."/>
            <person name="Keifenheim D."/>
            <person name="Levin J.Z."/>
            <person name="Mosher R.A."/>
            <person name="Mueller C.A."/>
            <person name="Pfiffner J."/>
            <person name="Priest M."/>
            <person name="Russ C."/>
            <person name="Smialowska A."/>
            <person name="Swoboda P."/>
            <person name="Sykes S.M."/>
            <person name="Vaughn M."/>
            <person name="Vengrova S."/>
            <person name="Yoder R."/>
            <person name="Zeng Q."/>
            <person name="Allshire R."/>
            <person name="Baulcombe D."/>
            <person name="Birren B.W."/>
            <person name="Brown W."/>
            <person name="Ekwall K."/>
            <person name="Kellis M."/>
            <person name="Leatherwood J."/>
            <person name="Levin H."/>
            <person name="Margalit H."/>
            <person name="Martienssen R."/>
            <person name="Nieduszynski C.A."/>
            <person name="Spatafora J.W."/>
            <person name="Friedman N."/>
            <person name="Dalgaard J.Z."/>
            <person name="Baumann P."/>
            <person name="Niki H."/>
            <person name="Regev A."/>
            <person name="Nusbaum C."/>
        </authorList>
    </citation>
    <scope>REVISION OF GENE MODEL</scope>
</reference>
<reference evidence="6" key="3">
    <citation type="journal article" date="2006" name="Nat. Biotechnol.">
        <title>ORFeome cloning and global analysis of protein localization in the fission yeast Schizosaccharomyces pombe.</title>
        <authorList>
            <person name="Matsuyama A."/>
            <person name="Arai R."/>
            <person name="Yashiroda Y."/>
            <person name="Shirai A."/>
            <person name="Kamata A."/>
            <person name="Sekido S."/>
            <person name="Kobayashi Y."/>
            <person name="Hashimoto A."/>
            <person name="Hamamoto M."/>
            <person name="Hiraoka Y."/>
            <person name="Horinouchi S."/>
            <person name="Yoshida M."/>
        </authorList>
    </citation>
    <scope>SUBCELLULAR LOCATION [LARGE SCALE ANALYSIS]</scope>
</reference>
<comment type="function">
    <text evidence="3">Catalyzes the attachment of serine to tRNA(Ser). Is also probably able to aminoacylate tRNA(Sec) with serine, to form the misacylated tRNA L-seryl-tRNA(Sec), which will be further converted into selenocysteinyl-tRNA(Sec) (By similarity).</text>
</comment>
<comment type="catalytic activity">
    <reaction evidence="3">
        <text>tRNA(Ser) + L-serine + ATP = L-seryl-tRNA(Ser) + AMP + diphosphate + H(+)</text>
        <dbReference type="Rhea" id="RHEA:12292"/>
        <dbReference type="Rhea" id="RHEA-COMP:9669"/>
        <dbReference type="Rhea" id="RHEA-COMP:9703"/>
        <dbReference type="ChEBI" id="CHEBI:15378"/>
        <dbReference type="ChEBI" id="CHEBI:30616"/>
        <dbReference type="ChEBI" id="CHEBI:33019"/>
        <dbReference type="ChEBI" id="CHEBI:33384"/>
        <dbReference type="ChEBI" id="CHEBI:78442"/>
        <dbReference type="ChEBI" id="CHEBI:78533"/>
        <dbReference type="ChEBI" id="CHEBI:456215"/>
        <dbReference type="EC" id="6.1.1.11"/>
    </reaction>
</comment>
<comment type="subunit">
    <text evidence="3">Homodimer. The tRNA molecule probably binds across the dimer (By similarity).</text>
</comment>
<comment type="subcellular location">
    <subcellularLocation>
        <location evidence="5">Mitochondrion matrix</location>
    </subcellularLocation>
</comment>
<comment type="domain">
    <text evidence="2">Consists of two distinct domains, a catalytic core and a N-terminal extension that is involved in tRNA binding.</text>
</comment>
<comment type="similarity">
    <text evidence="4">Belongs to the class-II aminoacyl-tRNA synthetase family. Type-1 seryl-tRNA synthetase subfamily.</text>
</comment>
<comment type="caution">
    <text evidence="6">Although this enzyme participates in the selenocysteinyl-tRNA(Sec) biosynthesis pathway in many taxa, this pathway has been shown in PubMed:30742068 to be lost in dikarya.</text>
</comment>
<accession>Q9UTB2</accession>
<dbReference type="EC" id="6.1.1.11" evidence="3"/>
<dbReference type="EMBL" id="CU329670">
    <property type="protein sequence ID" value="CAB61772.2"/>
    <property type="molecule type" value="Genomic_DNA"/>
</dbReference>
<dbReference type="PIR" id="T50193">
    <property type="entry name" value="T50193"/>
</dbReference>
<dbReference type="RefSeq" id="NP_594466.2">
    <property type="nucleotide sequence ID" value="NM_001019895.2"/>
</dbReference>
<dbReference type="SMR" id="Q9UTB2"/>
<dbReference type="FunCoup" id="Q9UTB2">
    <property type="interactions" value="349"/>
</dbReference>
<dbReference type="STRING" id="284812.Q9UTB2"/>
<dbReference type="PaxDb" id="4896-SPAC25B8.06c.1"/>
<dbReference type="EnsemblFungi" id="SPAC25B8.06c.1">
    <property type="protein sequence ID" value="SPAC25B8.06c.1:pep"/>
    <property type="gene ID" value="SPAC25B8.06c"/>
</dbReference>
<dbReference type="GeneID" id="2541567"/>
<dbReference type="KEGG" id="spo:2541567"/>
<dbReference type="PomBase" id="SPAC25B8.06c">
    <property type="gene designation" value="dia4"/>
</dbReference>
<dbReference type="VEuPathDB" id="FungiDB:SPAC25B8.06c"/>
<dbReference type="eggNOG" id="KOG2509">
    <property type="taxonomic scope" value="Eukaryota"/>
</dbReference>
<dbReference type="HOGENOM" id="CLU_023797_4_3_1"/>
<dbReference type="InParanoid" id="Q9UTB2"/>
<dbReference type="OMA" id="EQNCIDR"/>
<dbReference type="PRO" id="PR:Q9UTB2"/>
<dbReference type="Proteomes" id="UP000002485">
    <property type="component" value="Chromosome I"/>
</dbReference>
<dbReference type="GO" id="GO:0005829">
    <property type="term" value="C:cytosol"/>
    <property type="evidence" value="ECO:0000318"/>
    <property type="project" value="GO_Central"/>
</dbReference>
<dbReference type="GO" id="GO:0005759">
    <property type="term" value="C:mitochondrial matrix"/>
    <property type="evidence" value="ECO:0000305"/>
    <property type="project" value="PomBase"/>
</dbReference>
<dbReference type="GO" id="GO:0005739">
    <property type="term" value="C:mitochondrion"/>
    <property type="evidence" value="ECO:0007005"/>
    <property type="project" value="PomBase"/>
</dbReference>
<dbReference type="GO" id="GO:0005524">
    <property type="term" value="F:ATP binding"/>
    <property type="evidence" value="ECO:0000255"/>
    <property type="project" value="PomBase"/>
</dbReference>
<dbReference type="GO" id="GO:0004828">
    <property type="term" value="F:serine-tRNA ligase activity"/>
    <property type="evidence" value="ECO:0000318"/>
    <property type="project" value="GO_Central"/>
</dbReference>
<dbReference type="GO" id="GO:0000049">
    <property type="term" value="F:tRNA binding"/>
    <property type="evidence" value="ECO:0000318"/>
    <property type="project" value="GO_Central"/>
</dbReference>
<dbReference type="GO" id="GO:0070158">
    <property type="term" value="P:mitochondrial seryl-tRNA aminoacylation"/>
    <property type="evidence" value="ECO:0000318"/>
    <property type="project" value="GO_Central"/>
</dbReference>
<dbReference type="CDD" id="cd00770">
    <property type="entry name" value="SerRS_core"/>
    <property type="match status" value="1"/>
</dbReference>
<dbReference type="FunFam" id="3.30.930.10:FF:000305">
    <property type="entry name" value="Serine--tRNA ligase, mitochondrial"/>
    <property type="match status" value="1"/>
</dbReference>
<dbReference type="Gene3D" id="3.30.930.10">
    <property type="entry name" value="Bira Bifunctional Protein, Domain 2"/>
    <property type="match status" value="1"/>
</dbReference>
<dbReference type="Gene3D" id="1.10.287.40">
    <property type="entry name" value="Serine-tRNA synthetase, tRNA binding domain"/>
    <property type="match status" value="1"/>
</dbReference>
<dbReference type="InterPro" id="IPR002314">
    <property type="entry name" value="aa-tRNA-synt_IIb"/>
</dbReference>
<dbReference type="InterPro" id="IPR006195">
    <property type="entry name" value="aa-tRNA-synth_II"/>
</dbReference>
<dbReference type="InterPro" id="IPR045864">
    <property type="entry name" value="aa-tRNA-synth_II/BPL/LPL"/>
</dbReference>
<dbReference type="InterPro" id="IPR002317">
    <property type="entry name" value="Ser-tRNA-ligase_type_1"/>
</dbReference>
<dbReference type="InterPro" id="IPR015866">
    <property type="entry name" value="Ser-tRNA-synth_1_N"/>
</dbReference>
<dbReference type="InterPro" id="IPR042103">
    <property type="entry name" value="SerRS_1_N_sf"/>
</dbReference>
<dbReference type="InterPro" id="IPR033729">
    <property type="entry name" value="SerRS_core"/>
</dbReference>
<dbReference type="InterPro" id="IPR010978">
    <property type="entry name" value="tRNA-bd_arm"/>
</dbReference>
<dbReference type="NCBIfam" id="TIGR00414">
    <property type="entry name" value="serS"/>
    <property type="match status" value="1"/>
</dbReference>
<dbReference type="PANTHER" id="PTHR11778">
    <property type="entry name" value="SERYL-TRNA SYNTHETASE"/>
    <property type="match status" value="1"/>
</dbReference>
<dbReference type="Pfam" id="PF02403">
    <property type="entry name" value="Seryl_tRNA_N"/>
    <property type="match status" value="1"/>
</dbReference>
<dbReference type="Pfam" id="PF00587">
    <property type="entry name" value="tRNA-synt_2b"/>
    <property type="match status" value="1"/>
</dbReference>
<dbReference type="PIRSF" id="PIRSF001529">
    <property type="entry name" value="Ser-tRNA-synth_IIa"/>
    <property type="match status" value="1"/>
</dbReference>
<dbReference type="PRINTS" id="PR00981">
    <property type="entry name" value="TRNASYNTHSER"/>
</dbReference>
<dbReference type="SUPFAM" id="SSF55681">
    <property type="entry name" value="Class II aaRS and biotin synthetases"/>
    <property type="match status" value="1"/>
</dbReference>
<dbReference type="SUPFAM" id="SSF46589">
    <property type="entry name" value="tRNA-binding arm"/>
    <property type="match status" value="1"/>
</dbReference>
<dbReference type="PROSITE" id="PS50862">
    <property type="entry name" value="AA_TRNA_LIGASE_II"/>
    <property type="match status" value="1"/>
</dbReference>
<gene>
    <name type="primary">dia4</name>
    <name type="ORF">SPAC25B8.06c</name>
</gene>
<sequence>MRLTNRRFSTFLGNALPSKKKGFIFMSQLLYLRTFSTHTSYLRSSWQAILNYKYIYQNAEAVQRNCINRNLQAIAETVPKIRSLIDEKESLKNEFFPLLSLKKEITLQIERCSDPNERGKLVNEAKGLKKKTEEYNKIISKVTNDLYQYCLAVPNTTLPTVPVGPEDKAVVVQKIGSPLVKKTGSLKDHLQIANEGINLEDAAQASGHSFCYTTGDIALLEMAITNYAMDFAISKGWCPVIPPTIVRTDIALACGFQPRDEEGQQIYELDSYTSPLVSSPKQCLIGTAEISLAALGFKKTFNNFTERKVVGVSRAYRREAGARGKENRGLYRLHEFTKVELFAWTHPSRSSEMFNEIVNFQKEFVETLKIPARILNMPTAELGSSASQKYDIEAWMPARQSYGEITSASNCLEYQARRLLTRYRNDKDSGFVHTLNGTAAAIPRLIIAILENHQQEDGTVKVPETLVPYIHKEYLFKAK</sequence>
<name>SYSM_SCHPO</name>
<evidence type="ECO:0000250" key="1"/>
<evidence type="ECO:0000250" key="2">
    <source>
        <dbReference type="UniProtKB" id="P0A8L1"/>
    </source>
</evidence>
<evidence type="ECO:0000250" key="3">
    <source>
        <dbReference type="UniProtKB" id="Q9N0F3"/>
    </source>
</evidence>
<evidence type="ECO:0000255" key="4"/>
<evidence type="ECO:0000269" key="5">
    <source>
    </source>
</evidence>
<evidence type="ECO:0000305" key="6"/>
<proteinExistence type="inferred from homology"/>
<feature type="transit peptide" description="Mitochondrion" evidence="1">
    <location>
        <begin position="1"/>
        <end position="42"/>
    </location>
</feature>
<feature type="chain" id="PRO_0000315879" description="Serine--tRNA ligase, mitochondrial">
    <location>
        <begin position="43"/>
        <end position="479"/>
    </location>
</feature>
<feature type="binding site" evidence="3">
    <location>
        <begin position="287"/>
        <end position="289"/>
    </location>
    <ligand>
        <name>L-serine</name>
        <dbReference type="ChEBI" id="CHEBI:33384"/>
    </ligand>
</feature>
<feature type="binding site" evidence="3">
    <location>
        <begin position="317"/>
        <end position="319"/>
    </location>
    <ligand>
        <name>ATP</name>
        <dbReference type="ChEBI" id="CHEBI:30616"/>
    </ligand>
</feature>
<feature type="binding site" evidence="3">
    <location>
        <position position="340"/>
    </location>
    <ligand>
        <name>L-serine</name>
        <dbReference type="ChEBI" id="CHEBI:33384"/>
    </ligand>
</feature>
<feature type="binding site" evidence="3">
    <location>
        <begin position="404"/>
        <end position="407"/>
    </location>
    <ligand>
        <name>ATP</name>
        <dbReference type="ChEBI" id="CHEBI:30616"/>
    </ligand>
</feature>
<feature type="binding site" evidence="3">
    <location>
        <position position="438"/>
    </location>
    <ligand>
        <name>L-serine</name>
        <dbReference type="ChEBI" id="CHEBI:33384"/>
    </ligand>
</feature>
<organism>
    <name type="scientific">Schizosaccharomyces pombe (strain 972 / ATCC 24843)</name>
    <name type="common">Fission yeast</name>
    <dbReference type="NCBI Taxonomy" id="284812"/>
    <lineage>
        <taxon>Eukaryota</taxon>
        <taxon>Fungi</taxon>
        <taxon>Dikarya</taxon>
        <taxon>Ascomycota</taxon>
        <taxon>Taphrinomycotina</taxon>
        <taxon>Schizosaccharomycetes</taxon>
        <taxon>Schizosaccharomycetales</taxon>
        <taxon>Schizosaccharomycetaceae</taxon>
        <taxon>Schizosaccharomyces</taxon>
    </lineage>
</organism>
<keyword id="KW-0030">Aminoacyl-tRNA synthetase</keyword>
<keyword id="KW-0067">ATP-binding</keyword>
<keyword id="KW-0436">Ligase</keyword>
<keyword id="KW-0496">Mitochondrion</keyword>
<keyword id="KW-0547">Nucleotide-binding</keyword>
<keyword id="KW-0648">Protein biosynthesis</keyword>
<keyword id="KW-1185">Reference proteome</keyword>
<keyword id="KW-0809">Transit peptide</keyword>
<protein>
    <recommendedName>
        <fullName>Serine--tRNA ligase, mitochondrial</fullName>
        <ecNumber evidence="3">6.1.1.11</ecNumber>
    </recommendedName>
    <alternativeName>
        <fullName>Seryl-tRNA synthetase</fullName>
        <shortName>SerRS</shortName>
    </alternativeName>
    <alternativeName>
        <fullName evidence="6">Seryl-tRNA(Ser) synthetase</fullName>
    </alternativeName>
</protein>